<sequence length="752" mass="87829">MSNTEELIQNSIGFLQKTFKALPVSFDSIRHEPLPSSMLHASVLNFEWEPLEKNISAIHDRDSLIDIILKRFIIDSMTNAIEDEEENNLEKGLLNSCIGLDFVYNSRFNRSNPASWGNTFFELFSTIIDLLNSPSTFLKFWPYAESRIEWFKMNTSVEPVSLGESNLISYKQPLYEKLRHWNDILAKLENNDILNTVKHYNMKYKLENFLSELLPINEESNFNRSASISALQESDNEWNRSARERESNRSSDVIFAADYNFVFYHLIICPIEFAFSDLEYKNDVDRSLSPLLDAILEIEENFYSKIKMNNRTRYSLEEALNTEYYANYDVMTPKLPVYMKHSNAMKMDRNEFWANLQNIKESDDYTLRPTIMDISLSNTTCLYKQLTQEDDDYYRKQFILQLCFTTNLIRNLISSDETRNFYKSCYLRENPLSDIDFENLDEVNKKRGLNLCSYICDNRVLKFYKIKDPDFYRVIRKLMSSDEKFTTAKIDGFKEFQNFRISKEKIPPPAFDETFKKFTFIKMGNKLINNVWKIPTGLDKIEQEVKKPEGVYEAAQAKWESKISSETSGGEAKDEIIRQWQTLRFLRSRYLFDFDKVNEKTGVDGLFEEPRKVEALDDSFKEKLLYKINQEHRKKLQDAREYKIGKERKKRALEEEASFPEREQKIKSQRINSASQTEGDELKSEQTQPKGEISEENTKIKSSEVSSQDPDSGVAGEFAPQNTTAQLENPKTEDNNAATSNISNGSSTQDMK</sequence>
<comment type="function">
    <text evidence="4 5 6 9">Component the THO subcomplex of the TREX complex, which operates in coupling transcription elongation to mRNA export. The THO complex is recruited to transcribed genes and moves along the gene with the elongating polymerase during transcription. THO is important for stabilizing nascent RNA in the RNA polymerase II elongation complex by preventing formation of DNA:RNA hybrids behind the elongating polymerase. It functions in cotranscriptional formation of an export-competent messenger ribonucleoprotein particle (mRNP) by facilitating the loading of ATP-dependent RNA helicase SUB2 and the mRNA export factor YRA1 along the nascent mRNA.</text>
</comment>
<comment type="subunit">
    <text evidence="2 3">Component of the THO complex, which is composed of HPR1, MFT1, THO2 and THP2. Together with SUB2, TEX1 and YRA1, THO forms the transcription/export (TREX) complex. THO associates with DNA and RNA in vitro.</text>
</comment>
<comment type="interaction">
    <interactant intactId="EBI-8526">
        <id>P17629</id>
    </interactant>
    <interactant intactId="EBI-11642">
        <id>Q99257</id>
        <label>MEX67</label>
    </interactant>
    <organismsDiffer>false</organismsDiffer>
    <experiments>4</experiments>
</comment>
<comment type="subcellular location">
    <subcellularLocation>
        <location evidence="2 7">Nucleus</location>
    </subcellularLocation>
</comment>
<comment type="miscellaneous">
    <text>HPR1 is not required for sporulation, and is not essential for DNA repair. It is probably not a DNA topoisomerase.</text>
</comment>
<comment type="miscellaneous">
    <text evidence="8">Present with 1340 molecules/cell in log phase SD medium.</text>
</comment>
<keyword id="KW-0002">3D-structure</keyword>
<keyword id="KW-0539">Nucleus</keyword>
<keyword id="KW-0597">Phosphoprotein</keyword>
<keyword id="KW-1185">Reference proteome</keyword>
<keyword id="KW-0804">Transcription</keyword>
<keyword id="KW-0805">Transcription regulation</keyword>
<feature type="chain" id="PRO_0000084046" description="THO complex subunit HPR1">
    <location>
        <begin position="1"/>
        <end position="752"/>
    </location>
</feature>
<feature type="region of interest" description="Disordered" evidence="1">
    <location>
        <begin position="648"/>
        <end position="752"/>
    </location>
</feature>
<feature type="compositionally biased region" description="Basic and acidic residues" evidence="1">
    <location>
        <begin position="692"/>
        <end position="702"/>
    </location>
</feature>
<feature type="compositionally biased region" description="Polar residues" evidence="1">
    <location>
        <begin position="720"/>
        <end position="752"/>
    </location>
</feature>
<feature type="modified residue" description="Phosphoserine" evidence="11 12 13">
    <location>
        <position position="234"/>
    </location>
</feature>
<feature type="sequence conflict" description="In Ref. 1; AAA34685." evidence="10" ref="1">
    <original>F</original>
    <variation>L</variation>
    <location>
        <position position="404"/>
    </location>
</feature>
<feature type="helix" evidence="15">
    <location>
        <begin position="4"/>
        <end position="20"/>
    </location>
</feature>
<feature type="turn" evidence="15">
    <location>
        <begin position="27"/>
        <end position="31"/>
    </location>
</feature>
<feature type="helix" evidence="14">
    <location>
        <begin position="36"/>
        <end position="38"/>
    </location>
</feature>
<feature type="helix" evidence="15">
    <location>
        <begin position="43"/>
        <end position="45"/>
    </location>
</feature>
<feature type="turn" evidence="15">
    <location>
        <begin position="50"/>
        <end position="52"/>
    </location>
</feature>
<feature type="helix" evidence="14">
    <location>
        <begin position="56"/>
        <end position="58"/>
    </location>
</feature>
<feature type="strand" evidence="14">
    <location>
        <begin position="59"/>
        <end position="61"/>
    </location>
</feature>
<feature type="helix" evidence="15">
    <location>
        <begin position="62"/>
        <end position="77"/>
    </location>
</feature>
<feature type="helix" evidence="15">
    <location>
        <begin position="85"/>
        <end position="105"/>
    </location>
</feature>
<feature type="strand" evidence="15">
    <location>
        <begin position="106"/>
        <end position="111"/>
    </location>
</feature>
<feature type="turn" evidence="15">
    <location>
        <begin position="113"/>
        <end position="116"/>
    </location>
</feature>
<feature type="helix" evidence="15">
    <location>
        <begin position="117"/>
        <end position="130"/>
    </location>
</feature>
<feature type="helix" evidence="15">
    <location>
        <begin position="134"/>
        <end position="140"/>
    </location>
</feature>
<feature type="helix" evidence="15">
    <location>
        <begin position="143"/>
        <end position="146"/>
    </location>
</feature>
<feature type="strand" evidence="15">
    <location>
        <begin position="151"/>
        <end position="153"/>
    </location>
</feature>
<feature type="strand" evidence="15">
    <location>
        <begin position="174"/>
        <end position="177"/>
    </location>
</feature>
<feature type="turn" evidence="15">
    <location>
        <begin position="178"/>
        <end position="180"/>
    </location>
</feature>
<feature type="helix" evidence="15">
    <location>
        <begin position="181"/>
        <end position="190"/>
    </location>
</feature>
<feature type="strand" evidence="15">
    <location>
        <begin position="192"/>
        <end position="194"/>
    </location>
</feature>
<feature type="helix" evidence="15">
    <location>
        <begin position="198"/>
        <end position="213"/>
    </location>
</feature>
<feature type="turn" evidence="15">
    <location>
        <begin position="219"/>
        <end position="223"/>
    </location>
</feature>
<feature type="turn" evidence="15">
    <location>
        <begin position="252"/>
        <end position="254"/>
    </location>
</feature>
<feature type="helix" evidence="15">
    <location>
        <begin position="256"/>
        <end position="265"/>
    </location>
</feature>
<feature type="helix" evidence="15">
    <location>
        <begin position="271"/>
        <end position="274"/>
    </location>
</feature>
<feature type="turn" evidence="15">
    <location>
        <begin position="278"/>
        <end position="280"/>
    </location>
</feature>
<feature type="helix" evidence="15">
    <location>
        <begin position="285"/>
        <end position="296"/>
    </location>
</feature>
<feature type="turn" evidence="15">
    <location>
        <begin position="298"/>
        <end position="302"/>
    </location>
</feature>
<feature type="helix" evidence="15">
    <location>
        <begin position="303"/>
        <end position="312"/>
    </location>
</feature>
<feature type="helix" evidence="15">
    <location>
        <begin position="314"/>
        <end position="320"/>
    </location>
</feature>
<feature type="strand" evidence="14">
    <location>
        <begin position="321"/>
        <end position="323"/>
    </location>
</feature>
<feature type="turn" evidence="15">
    <location>
        <begin position="338"/>
        <end position="340"/>
    </location>
</feature>
<feature type="helix" evidence="15">
    <location>
        <begin position="343"/>
        <end position="347"/>
    </location>
</feature>
<feature type="helix" evidence="15">
    <location>
        <begin position="350"/>
        <end position="353"/>
    </location>
</feature>
<feature type="turn" evidence="15">
    <location>
        <begin position="354"/>
        <end position="356"/>
    </location>
</feature>
<feature type="helix" evidence="15">
    <location>
        <begin position="357"/>
        <end position="360"/>
    </location>
</feature>
<feature type="strand" evidence="15">
    <location>
        <begin position="362"/>
        <end position="365"/>
    </location>
</feature>
<feature type="strand" evidence="14">
    <location>
        <begin position="376"/>
        <end position="378"/>
    </location>
</feature>
<feature type="helix" evidence="15">
    <location>
        <begin position="379"/>
        <end position="385"/>
    </location>
</feature>
<feature type="strand" evidence="16">
    <location>
        <begin position="393"/>
        <end position="395"/>
    </location>
</feature>
<feature type="helix" evidence="15">
    <location>
        <begin position="397"/>
        <end position="404"/>
    </location>
</feature>
<feature type="helix" evidence="15">
    <location>
        <begin position="407"/>
        <end position="413"/>
    </location>
</feature>
<feature type="helix" evidence="15">
    <location>
        <begin position="418"/>
        <end position="427"/>
    </location>
</feature>
<feature type="helix" evidence="15">
    <location>
        <begin position="442"/>
        <end position="448"/>
    </location>
</feature>
<feature type="helix" evidence="15">
    <location>
        <begin position="450"/>
        <end position="453"/>
    </location>
</feature>
<feature type="helix" evidence="15">
    <location>
        <begin position="454"/>
        <end position="459"/>
    </location>
</feature>
<feature type="helix" evidence="15">
    <location>
        <begin position="460"/>
        <end position="466"/>
    </location>
</feature>
<feature type="helix" evidence="15">
    <location>
        <begin position="469"/>
        <end position="480"/>
    </location>
</feature>
<feature type="helix" evidence="15">
    <location>
        <begin position="483"/>
        <end position="491"/>
    </location>
</feature>
<feature type="helix" evidence="14">
    <location>
        <begin position="494"/>
        <end position="496"/>
    </location>
</feature>
<feature type="strand" evidence="15">
    <location>
        <begin position="520"/>
        <end position="524"/>
    </location>
</feature>
<feature type="helix" evidence="15">
    <location>
        <begin position="526"/>
        <end position="531"/>
    </location>
</feature>
<feature type="helix" evidence="15">
    <location>
        <begin position="539"/>
        <end position="542"/>
    </location>
</feature>
<feature type="helix" evidence="15">
    <location>
        <begin position="548"/>
        <end position="562"/>
    </location>
</feature>
<feature type="helix" evidence="15">
    <location>
        <begin position="576"/>
        <end position="583"/>
    </location>
</feature>
<feature type="strand" evidence="15">
    <location>
        <begin position="584"/>
        <end position="590"/>
    </location>
</feature>
<feature type="strand" evidence="15">
    <location>
        <begin position="595"/>
        <end position="599"/>
    </location>
</feature>
<evidence type="ECO:0000256" key="1">
    <source>
        <dbReference type="SAM" id="MobiDB-lite"/>
    </source>
</evidence>
<evidence type="ECO:0000269" key="2">
    <source>
    </source>
</evidence>
<evidence type="ECO:0000269" key="3">
    <source>
    </source>
</evidence>
<evidence type="ECO:0000269" key="4">
    <source>
    </source>
</evidence>
<evidence type="ECO:0000269" key="5">
    <source>
    </source>
</evidence>
<evidence type="ECO:0000269" key="6">
    <source>
    </source>
</evidence>
<evidence type="ECO:0000269" key="7">
    <source>
    </source>
</evidence>
<evidence type="ECO:0000269" key="8">
    <source>
    </source>
</evidence>
<evidence type="ECO:0000269" key="9">
    <source>
    </source>
</evidence>
<evidence type="ECO:0000305" key="10"/>
<evidence type="ECO:0007744" key="11">
    <source>
    </source>
</evidence>
<evidence type="ECO:0007744" key="12">
    <source>
    </source>
</evidence>
<evidence type="ECO:0007744" key="13">
    <source>
    </source>
</evidence>
<evidence type="ECO:0007829" key="14">
    <source>
        <dbReference type="PDB" id="7APX"/>
    </source>
</evidence>
<evidence type="ECO:0007829" key="15">
    <source>
        <dbReference type="PDB" id="7V2W"/>
    </source>
</evidence>
<evidence type="ECO:0007829" key="16">
    <source>
        <dbReference type="PDB" id="7V2Y"/>
    </source>
</evidence>
<protein>
    <recommendedName>
        <fullName>THO complex subunit HPR1</fullName>
    </recommendedName>
    <alternativeName>
        <fullName>Hyperrecombination protein 1</fullName>
    </alternativeName>
</protein>
<gene>
    <name type="primary">HPR1</name>
    <name type="ordered locus">YDR138W</name>
    <name type="ORF">YD9302.14</name>
</gene>
<reference key="1">
    <citation type="journal article" date="1990" name="Mol. Cell. Biol.">
        <title>HPR1, a novel yeast gene that prevents intrachromosomal excision recombination, shows carboxy-terminal homology to the Saccharomyces cerevisiae TOP1 gene.</title>
        <authorList>
            <person name="Aguilera A."/>
            <person name="Klein H.L."/>
        </authorList>
    </citation>
    <scope>NUCLEOTIDE SEQUENCE [GENOMIC DNA]</scope>
</reference>
<reference key="2">
    <citation type="journal article" date="1997" name="Nature">
        <title>The nucleotide sequence of Saccharomyces cerevisiae chromosome IV.</title>
        <authorList>
            <person name="Jacq C."/>
            <person name="Alt-Moerbe J."/>
            <person name="Andre B."/>
            <person name="Arnold W."/>
            <person name="Bahr A."/>
            <person name="Ballesta J.P.G."/>
            <person name="Bargues M."/>
            <person name="Baron L."/>
            <person name="Becker A."/>
            <person name="Biteau N."/>
            <person name="Bloecker H."/>
            <person name="Blugeon C."/>
            <person name="Boskovic J."/>
            <person name="Brandt P."/>
            <person name="Brueckner M."/>
            <person name="Buitrago M.J."/>
            <person name="Coster F."/>
            <person name="Delaveau T."/>
            <person name="del Rey F."/>
            <person name="Dujon B."/>
            <person name="Eide L.G."/>
            <person name="Garcia-Cantalejo J.M."/>
            <person name="Goffeau A."/>
            <person name="Gomez-Peris A."/>
            <person name="Granotier C."/>
            <person name="Hanemann V."/>
            <person name="Hankeln T."/>
            <person name="Hoheisel J.D."/>
            <person name="Jaeger W."/>
            <person name="Jimenez A."/>
            <person name="Jonniaux J.-L."/>
            <person name="Kraemer C."/>
            <person name="Kuester H."/>
            <person name="Laamanen P."/>
            <person name="Legros Y."/>
            <person name="Louis E.J."/>
            <person name="Moeller-Rieker S."/>
            <person name="Monnet A."/>
            <person name="Moro M."/>
            <person name="Mueller-Auer S."/>
            <person name="Nussbaumer B."/>
            <person name="Paricio N."/>
            <person name="Paulin L."/>
            <person name="Perea J."/>
            <person name="Perez-Alonso M."/>
            <person name="Perez-Ortin J.E."/>
            <person name="Pohl T.M."/>
            <person name="Prydz H."/>
            <person name="Purnelle B."/>
            <person name="Rasmussen S.W."/>
            <person name="Remacha M.A."/>
            <person name="Revuelta J.L."/>
            <person name="Rieger M."/>
            <person name="Salom D."/>
            <person name="Saluz H.P."/>
            <person name="Saiz J.E."/>
            <person name="Saren A.-M."/>
            <person name="Schaefer M."/>
            <person name="Scharfe M."/>
            <person name="Schmidt E.R."/>
            <person name="Schneider C."/>
            <person name="Scholler P."/>
            <person name="Schwarz S."/>
            <person name="Soler-Mira A."/>
            <person name="Urrestarazu L.A."/>
            <person name="Verhasselt P."/>
            <person name="Vissers S."/>
            <person name="Voet M."/>
            <person name="Volckaert G."/>
            <person name="Wagner G."/>
            <person name="Wambutt R."/>
            <person name="Wedler E."/>
            <person name="Wedler H."/>
            <person name="Woelfl S."/>
            <person name="Harris D.E."/>
            <person name="Bowman S."/>
            <person name="Brown D."/>
            <person name="Churcher C.M."/>
            <person name="Connor R."/>
            <person name="Dedman K."/>
            <person name="Gentles S."/>
            <person name="Hamlin N."/>
            <person name="Hunt S."/>
            <person name="Jones L."/>
            <person name="McDonald S."/>
            <person name="Murphy L.D."/>
            <person name="Niblett D."/>
            <person name="Odell C."/>
            <person name="Oliver K."/>
            <person name="Rajandream M.A."/>
            <person name="Richards C."/>
            <person name="Shore L."/>
            <person name="Walsh S.V."/>
            <person name="Barrell B.G."/>
            <person name="Dietrich F.S."/>
            <person name="Mulligan J.T."/>
            <person name="Allen E."/>
            <person name="Araujo R."/>
            <person name="Aviles E."/>
            <person name="Berno A."/>
            <person name="Carpenter J."/>
            <person name="Chen E."/>
            <person name="Cherry J.M."/>
            <person name="Chung E."/>
            <person name="Duncan M."/>
            <person name="Hunicke-Smith S."/>
            <person name="Hyman R.W."/>
            <person name="Komp C."/>
            <person name="Lashkari D."/>
            <person name="Lew H."/>
            <person name="Lin D."/>
            <person name="Mosedale D."/>
            <person name="Nakahara K."/>
            <person name="Namath A."/>
            <person name="Oefner P."/>
            <person name="Oh C."/>
            <person name="Petel F.X."/>
            <person name="Roberts D."/>
            <person name="Schramm S."/>
            <person name="Schroeder M."/>
            <person name="Shogren T."/>
            <person name="Shroff N."/>
            <person name="Winant A."/>
            <person name="Yelton M.A."/>
            <person name="Botstein D."/>
            <person name="Davis R.W."/>
            <person name="Johnston M."/>
            <person name="Andrews S."/>
            <person name="Brinkman R."/>
            <person name="Cooper J."/>
            <person name="Ding H."/>
            <person name="Du Z."/>
            <person name="Favello A."/>
            <person name="Fulton L."/>
            <person name="Gattung S."/>
            <person name="Greco T."/>
            <person name="Hallsworth K."/>
            <person name="Hawkins J."/>
            <person name="Hillier L.W."/>
            <person name="Jier M."/>
            <person name="Johnson D."/>
            <person name="Johnston L."/>
            <person name="Kirsten J."/>
            <person name="Kucaba T."/>
            <person name="Langston Y."/>
            <person name="Latreille P."/>
            <person name="Le T."/>
            <person name="Mardis E."/>
            <person name="Menezes S."/>
            <person name="Miller N."/>
            <person name="Nhan M."/>
            <person name="Pauley A."/>
            <person name="Peluso D."/>
            <person name="Rifkin L."/>
            <person name="Riles L."/>
            <person name="Taich A."/>
            <person name="Trevaskis E."/>
            <person name="Vignati D."/>
            <person name="Wilcox L."/>
            <person name="Wohldman P."/>
            <person name="Vaudin M."/>
            <person name="Wilson R."/>
            <person name="Waterston R."/>
            <person name="Albermann K."/>
            <person name="Hani J."/>
            <person name="Heumann K."/>
            <person name="Kleine K."/>
            <person name="Mewes H.-W."/>
            <person name="Zollner A."/>
            <person name="Zaccaria P."/>
        </authorList>
    </citation>
    <scope>NUCLEOTIDE SEQUENCE [LARGE SCALE GENOMIC DNA]</scope>
    <source>
        <strain>ATCC 204508 / S288c</strain>
    </source>
</reference>
<reference key="3">
    <citation type="journal article" date="2014" name="G3 (Bethesda)">
        <title>The reference genome sequence of Saccharomyces cerevisiae: Then and now.</title>
        <authorList>
            <person name="Engel S.R."/>
            <person name="Dietrich F.S."/>
            <person name="Fisk D.G."/>
            <person name="Binkley G."/>
            <person name="Balakrishnan R."/>
            <person name="Costanzo M.C."/>
            <person name="Dwight S.S."/>
            <person name="Hitz B.C."/>
            <person name="Karra K."/>
            <person name="Nash R.S."/>
            <person name="Weng S."/>
            <person name="Wong E.D."/>
            <person name="Lloyd P."/>
            <person name="Skrzypek M.S."/>
            <person name="Miyasato S.R."/>
            <person name="Simison M."/>
            <person name="Cherry J.M."/>
        </authorList>
    </citation>
    <scope>GENOME REANNOTATION</scope>
    <source>
        <strain>ATCC 204508 / S288c</strain>
    </source>
</reference>
<reference key="4">
    <citation type="journal article" date="2000" name="EMBO J.">
        <title>A protein complex containing Tho2, Hpr1, Mft1 and a novel protein, Thp2, connects transcription elongation with mitotic recombination in Saccharomyces cerevisiae.</title>
        <authorList>
            <person name="Chavez S."/>
            <person name="Beilharz T."/>
            <person name="Rondon A.G."/>
            <person name="Erdjument-Bromage H."/>
            <person name="Tempst P."/>
            <person name="Svejstrup J.Q."/>
            <person name="Lithgow T."/>
            <person name="Aguilera A."/>
        </authorList>
    </citation>
    <scope>IDENTIFICATION IN THO COMPLEX</scope>
    <scope>IDENTIFICATION BY MASS SPECTROMETRY</scope>
    <scope>SUBCELLULAR LOCATION</scope>
</reference>
<reference key="5">
    <citation type="journal article" date="2002" name="EMBO J.">
        <title>The yeast THO complex and mRNA export factors link RNA metabolism with transcription and genome instability.</title>
        <authorList>
            <person name="Jimeno S."/>
            <person name="Rondon A.G."/>
            <person name="Luna R."/>
            <person name="Aguilera A."/>
        </authorList>
    </citation>
    <scope>FUNCTION</scope>
</reference>
<reference key="6">
    <citation type="journal article" date="2002" name="Nature">
        <title>TREX is a conserved complex coupling transcription with messenger RNA export.</title>
        <authorList>
            <person name="Straesser K."/>
            <person name="Masuda S."/>
            <person name="Mason P."/>
            <person name="Pfannstiel J."/>
            <person name="Oppizzi M."/>
            <person name="Rodriguez-Navarro S."/>
            <person name="Rondon A.G."/>
            <person name="Aguilera A."/>
            <person name="Struhl K."/>
            <person name="Reed R."/>
            <person name="Hurt E."/>
        </authorList>
    </citation>
    <scope>IDENTIFICATION IN TREX COMPLEX</scope>
    <scope>IDENTIFICATION BY MASS SPECTROMETRY</scope>
</reference>
<reference key="7">
    <citation type="journal article" date="2003" name="J. Biol. Chem.">
        <title>Molecular evidence that the eukaryotic THO/TREX complex is required for efficient transcription elongation.</title>
        <authorList>
            <person name="Rondon A.G."/>
            <person name="Jimeno S."/>
            <person name="Garcia-Rubio M."/>
            <person name="Aguilera A."/>
        </authorList>
    </citation>
    <scope>FUNCTION</scope>
</reference>
<reference key="8">
    <citation type="journal article" date="2003" name="Mol. Cell">
        <title>Cotranscriptionally formed DNA:RNA hybrids mediate transcription elongation impairment and transcription-associated recombination.</title>
        <authorList>
            <person name="Huertas P."/>
            <person name="Aguilera A."/>
        </authorList>
    </citation>
    <scope>FUNCTION</scope>
</reference>
<reference key="9">
    <citation type="journal article" date="2003" name="Nature">
        <title>Global analysis of protein localization in budding yeast.</title>
        <authorList>
            <person name="Huh W.-K."/>
            <person name="Falvo J.V."/>
            <person name="Gerke L.C."/>
            <person name="Carroll A.S."/>
            <person name="Howson R.W."/>
            <person name="Weissman J.S."/>
            <person name="O'Shea E.K."/>
        </authorList>
    </citation>
    <scope>SUBCELLULAR LOCATION [LARGE SCALE ANALYSIS]</scope>
</reference>
<reference key="10">
    <citation type="journal article" date="2003" name="Nature">
        <title>Global analysis of protein expression in yeast.</title>
        <authorList>
            <person name="Ghaemmaghami S."/>
            <person name="Huh W.-K."/>
            <person name="Bower K."/>
            <person name="Howson R.W."/>
            <person name="Belle A."/>
            <person name="Dephoure N."/>
            <person name="O'Shea E.K."/>
            <person name="Weissman J.S."/>
        </authorList>
    </citation>
    <scope>LEVEL OF PROTEIN EXPRESSION [LARGE SCALE ANALYSIS]</scope>
</reference>
<reference key="11">
    <citation type="journal article" date="2004" name="EMBO J.">
        <title>Biochemical analysis of TREX complex recruitment to intronless and intron-containing yeast genes.</title>
        <authorList>
            <person name="Abruzzi K.C."/>
            <person name="Lacadie S."/>
            <person name="Rosbash M."/>
        </authorList>
    </citation>
    <scope>FUNCTION</scope>
</reference>
<reference key="12">
    <citation type="journal article" date="2007" name="J. Proteome Res.">
        <title>Large-scale phosphorylation analysis of alpha-factor-arrested Saccharomyces cerevisiae.</title>
        <authorList>
            <person name="Li X."/>
            <person name="Gerber S.A."/>
            <person name="Rudner A.D."/>
            <person name="Beausoleil S.A."/>
            <person name="Haas W."/>
            <person name="Villen J."/>
            <person name="Elias J.E."/>
            <person name="Gygi S.P."/>
        </authorList>
    </citation>
    <scope>PHOSPHORYLATION [LARGE SCALE ANALYSIS] AT SER-234</scope>
    <scope>IDENTIFICATION BY MASS SPECTROMETRY [LARGE SCALE ANALYSIS]</scope>
    <source>
        <strain>ADR376</strain>
    </source>
</reference>
<reference key="13">
    <citation type="journal article" date="2008" name="Mol. Cell. Proteomics">
        <title>A multidimensional chromatography technology for in-depth phosphoproteome analysis.</title>
        <authorList>
            <person name="Albuquerque C.P."/>
            <person name="Smolka M.B."/>
            <person name="Payne S.H."/>
            <person name="Bafna V."/>
            <person name="Eng J."/>
            <person name="Zhou H."/>
        </authorList>
    </citation>
    <scope>PHOSPHORYLATION [LARGE SCALE ANALYSIS] AT SER-234</scope>
    <scope>IDENTIFICATION BY MASS SPECTROMETRY [LARGE SCALE ANALYSIS]</scope>
</reference>
<reference key="14">
    <citation type="journal article" date="2009" name="Science">
        <title>Global analysis of Cdk1 substrate phosphorylation sites provides insights into evolution.</title>
        <authorList>
            <person name="Holt L.J."/>
            <person name="Tuch B.B."/>
            <person name="Villen J."/>
            <person name="Johnson A.D."/>
            <person name="Gygi S.P."/>
            <person name="Morgan D.O."/>
        </authorList>
    </citation>
    <scope>PHOSPHORYLATION [LARGE SCALE ANALYSIS] AT SER-234</scope>
    <scope>IDENTIFICATION BY MASS SPECTROMETRY [LARGE SCALE ANALYSIS]</scope>
</reference>
<name>HPR1_YEAST</name>
<proteinExistence type="evidence at protein level"/>
<accession>P17629</accession>
<accession>D6VSC1</accession>
<accession>Q03918</accession>
<organism>
    <name type="scientific">Saccharomyces cerevisiae (strain ATCC 204508 / S288c)</name>
    <name type="common">Baker's yeast</name>
    <dbReference type="NCBI Taxonomy" id="559292"/>
    <lineage>
        <taxon>Eukaryota</taxon>
        <taxon>Fungi</taxon>
        <taxon>Dikarya</taxon>
        <taxon>Ascomycota</taxon>
        <taxon>Saccharomycotina</taxon>
        <taxon>Saccharomycetes</taxon>
        <taxon>Saccharomycetales</taxon>
        <taxon>Saccharomycetaceae</taxon>
        <taxon>Saccharomyces</taxon>
    </lineage>
</organism>
<dbReference type="EMBL" id="M30484">
    <property type="protein sequence ID" value="AAA34685.1"/>
    <property type="molecule type" value="Genomic_DNA"/>
</dbReference>
<dbReference type="EMBL" id="Z48179">
    <property type="protein sequence ID" value="CAA88220.1"/>
    <property type="molecule type" value="Genomic_DNA"/>
</dbReference>
<dbReference type="EMBL" id="BK006938">
    <property type="protein sequence ID" value="DAA11981.1"/>
    <property type="molecule type" value="Genomic_DNA"/>
</dbReference>
<dbReference type="PIR" id="S51866">
    <property type="entry name" value="S51866"/>
</dbReference>
<dbReference type="RefSeq" id="NP_010422.1">
    <property type="nucleotide sequence ID" value="NM_001180445.1"/>
</dbReference>
<dbReference type="PDB" id="7APX">
    <property type="method" value="EM"/>
    <property type="resolution" value="3.40 A"/>
    <property type="chains" value="B=1-720"/>
</dbReference>
<dbReference type="PDB" id="7AQO">
    <property type="method" value="EM"/>
    <property type="resolution" value="4.50 A"/>
    <property type="chains" value="B/H=1-720"/>
</dbReference>
<dbReference type="PDB" id="7LUV">
    <property type="method" value="EM"/>
    <property type="resolution" value="3.70 A"/>
    <property type="chains" value="A=1-603"/>
</dbReference>
<dbReference type="PDB" id="7V2W">
    <property type="method" value="EM"/>
    <property type="resolution" value="3.20 A"/>
    <property type="chains" value="F=1-752"/>
</dbReference>
<dbReference type="PDB" id="7V2Y">
    <property type="method" value="EM"/>
    <property type="resolution" value="3.40 A"/>
    <property type="chains" value="A=1-752"/>
</dbReference>
<dbReference type="PDBsum" id="7APX"/>
<dbReference type="PDBsum" id="7AQO"/>
<dbReference type="PDBsum" id="7LUV"/>
<dbReference type="PDBsum" id="7V2W"/>
<dbReference type="PDBsum" id="7V2Y"/>
<dbReference type="EMDB" id="EMD-11859"/>
<dbReference type="EMDB" id="EMD-11871"/>
<dbReference type="EMDB" id="EMD-16841"/>
<dbReference type="EMDB" id="EMD-23527"/>
<dbReference type="EMDB" id="EMD-31669"/>
<dbReference type="EMDB" id="EMD-31670"/>
<dbReference type="SMR" id="P17629"/>
<dbReference type="BioGRID" id="32192">
    <property type="interactions" value="183"/>
</dbReference>
<dbReference type="ComplexPortal" id="CPX-1792">
    <property type="entry name" value="THO complex"/>
</dbReference>
<dbReference type="ComplexPortal" id="CPX-1793">
    <property type="entry name" value="TREX complex"/>
</dbReference>
<dbReference type="DIP" id="DIP-6266N"/>
<dbReference type="FunCoup" id="P17629">
    <property type="interactions" value="136"/>
</dbReference>
<dbReference type="IntAct" id="P17629">
    <property type="interactions" value="32"/>
</dbReference>
<dbReference type="MINT" id="P17629"/>
<dbReference type="STRING" id="4932.YDR138W"/>
<dbReference type="TCDB" id="3.A.22.1.1">
    <property type="family name" value="the transcription-coupled trex/tap nuclear mrna export complex (trex) family"/>
</dbReference>
<dbReference type="iPTMnet" id="P17629"/>
<dbReference type="PaxDb" id="4932-YDR138W"/>
<dbReference type="PeptideAtlas" id="P17629"/>
<dbReference type="EnsemblFungi" id="YDR138W_mRNA">
    <property type="protein sequence ID" value="YDR138W"/>
    <property type="gene ID" value="YDR138W"/>
</dbReference>
<dbReference type="GeneID" id="851716"/>
<dbReference type="KEGG" id="sce:YDR138W"/>
<dbReference type="AGR" id="SGD:S000002545"/>
<dbReference type="SGD" id="S000002545">
    <property type="gene designation" value="HPR1"/>
</dbReference>
<dbReference type="VEuPathDB" id="FungiDB:YDR138W"/>
<dbReference type="eggNOG" id="ENOG502QU83">
    <property type="taxonomic scope" value="Eukaryota"/>
</dbReference>
<dbReference type="HOGENOM" id="CLU_022496_0_0_1"/>
<dbReference type="InParanoid" id="P17629"/>
<dbReference type="OMA" id="FWPYAES"/>
<dbReference type="OrthoDB" id="4060917at2759"/>
<dbReference type="BioCyc" id="YEAST:G3O-29735-MONOMER"/>
<dbReference type="BioGRID-ORCS" id="851716">
    <property type="hits" value="1 hit in 10 CRISPR screens"/>
</dbReference>
<dbReference type="PRO" id="PR:P17629"/>
<dbReference type="Proteomes" id="UP000002311">
    <property type="component" value="Chromosome IV"/>
</dbReference>
<dbReference type="RNAct" id="P17629">
    <property type="molecule type" value="protein"/>
</dbReference>
<dbReference type="GO" id="GO:0016593">
    <property type="term" value="C:Cdc73/Paf1 complex"/>
    <property type="evidence" value="ECO:0000353"/>
    <property type="project" value="SGD"/>
</dbReference>
<dbReference type="GO" id="GO:0000781">
    <property type="term" value="C:chromosome, telomeric region"/>
    <property type="evidence" value="ECO:0000314"/>
    <property type="project" value="SGD"/>
</dbReference>
<dbReference type="GO" id="GO:0000446">
    <property type="term" value="C:nucleoplasmic THO complex"/>
    <property type="evidence" value="ECO:0000315"/>
    <property type="project" value="SGD"/>
</dbReference>
<dbReference type="GO" id="GO:0000347">
    <property type="term" value="C:THO complex"/>
    <property type="evidence" value="ECO:0000353"/>
    <property type="project" value="ComplexPortal"/>
</dbReference>
<dbReference type="GO" id="GO:0000445">
    <property type="term" value="C:THO complex part of transcription export complex"/>
    <property type="evidence" value="ECO:0000315"/>
    <property type="project" value="SGD"/>
</dbReference>
<dbReference type="GO" id="GO:0000346">
    <property type="term" value="C:transcription export complex"/>
    <property type="evidence" value="ECO:0000353"/>
    <property type="project" value="ComplexPortal"/>
</dbReference>
<dbReference type="GO" id="GO:0060090">
    <property type="term" value="F:molecular adaptor activity"/>
    <property type="evidence" value="ECO:0000315"/>
    <property type="project" value="SGD"/>
</dbReference>
<dbReference type="GO" id="GO:0003676">
    <property type="term" value="F:nucleic acid binding"/>
    <property type="evidence" value="ECO:0000314"/>
    <property type="project" value="SGD"/>
</dbReference>
<dbReference type="GO" id="GO:0006310">
    <property type="term" value="P:DNA recombination"/>
    <property type="evidence" value="ECO:0000315"/>
    <property type="project" value="SGD"/>
</dbReference>
<dbReference type="GO" id="GO:0031124">
    <property type="term" value="P:mRNA 3'-end processing"/>
    <property type="evidence" value="ECO:0000315"/>
    <property type="project" value="SGD"/>
</dbReference>
<dbReference type="GO" id="GO:0006406">
    <property type="term" value="P:mRNA export from nucleus"/>
    <property type="evidence" value="ECO:0000315"/>
    <property type="project" value="SGD"/>
</dbReference>
<dbReference type="GO" id="GO:0045943">
    <property type="term" value="P:positive regulation of transcription by RNA polymerase I"/>
    <property type="evidence" value="ECO:0000315"/>
    <property type="project" value="SGD"/>
</dbReference>
<dbReference type="GO" id="GO:2001209">
    <property type="term" value="P:positive regulation of transcription elongation by RNA polymerase I"/>
    <property type="evidence" value="ECO:0000315"/>
    <property type="project" value="SGD"/>
</dbReference>
<dbReference type="GO" id="GO:0006368">
    <property type="term" value="P:transcription elongation by RNA polymerase II"/>
    <property type="evidence" value="ECO:0000315"/>
    <property type="project" value="SGD"/>
</dbReference>
<dbReference type="GO" id="GO:0006283">
    <property type="term" value="P:transcription-coupled nucleotide-excision repair"/>
    <property type="evidence" value="ECO:0000315"/>
    <property type="project" value="SGD"/>
</dbReference>
<dbReference type="InterPro" id="IPR021861">
    <property type="entry name" value="THO_THOC1"/>
</dbReference>
<dbReference type="Pfam" id="PF11957">
    <property type="entry name" value="efThoc1"/>
    <property type="match status" value="1"/>
</dbReference>